<organism>
    <name type="scientific">Nitrosomonas europaea (strain ATCC 19718 / CIP 103999 / KCTC 2705 / NBRC 14298)</name>
    <dbReference type="NCBI Taxonomy" id="228410"/>
    <lineage>
        <taxon>Bacteria</taxon>
        <taxon>Pseudomonadati</taxon>
        <taxon>Pseudomonadota</taxon>
        <taxon>Betaproteobacteria</taxon>
        <taxon>Nitrosomonadales</taxon>
        <taxon>Nitrosomonadaceae</taxon>
        <taxon>Nitrosomonas</taxon>
    </lineage>
</organism>
<keyword id="KW-0963">Cytoplasm</keyword>
<keyword id="KW-0227">DNA damage</keyword>
<keyword id="KW-0228">DNA excision</keyword>
<keyword id="KW-0234">DNA repair</keyword>
<keyword id="KW-0267">Excision nuclease</keyword>
<keyword id="KW-1185">Reference proteome</keyword>
<keyword id="KW-0742">SOS response</keyword>
<evidence type="ECO:0000255" key="1">
    <source>
        <dbReference type="HAMAP-Rule" id="MF_00203"/>
    </source>
</evidence>
<feature type="chain" id="PRO_0000227451" description="UvrABC system protein C">
    <location>
        <begin position="1"/>
        <end position="604"/>
    </location>
</feature>
<feature type="domain" description="GIY-YIG" evidence="1">
    <location>
        <begin position="17"/>
        <end position="95"/>
    </location>
</feature>
<feature type="domain" description="UVR" evidence="1">
    <location>
        <begin position="204"/>
        <end position="239"/>
    </location>
</feature>
<proteinExistence type="inferred from homology"/>
<name>UVRC_NITEU</name>
<sequence>MPDAHFDGKAFVLTLPAQPGVYRMLNAAGDVIYVGKAIDLRKRVSSYFQKSGLSPRIQLMVSQIAGIETTVTRSEAEALLLENNLIKSLAPRYNILFRDDKSYPYLLLTRHIFPRLAFYRGALDDRHQYFGPFPNAGVVKSSIQLLQKVFRLRTCENSVFDHRTRPCLLYQIKRCSGPCVGLITPEAYQQDVKSAAMFLQGKQDEVLKTIEQKMFTASDQQDYEQAAQLRDQMQALRKIQEKQFVDSGKALDADVIACAIEPDSHAVAVNLVMIRSGRHLGDKTFFPQNVYEADISTVLEAFVTQHYLNRSVPPLIILGQKIRVTLLQKLLSDQAGHKITLTTNPIGERRKWLDMAAENAQLALQQMLIQQASQEDRLQALQEALNLPGLARIECFDISHTMGEATIASCVVYDRFAMRNGEYRRYNITGIVPGDDYAAMRDVLQRRYAKLAMEEGKLPDLILIDGGKGQIRVASEVMIELGLNDIPLVGVAKGETRKPGLEQLILPWQEEALHLPDDHPALHLIQQIRDEAHRFAIQGHRAKRAKTRKISTLEQISGIGTKRRQSLLTRFGGLKGVKNASIEELQQTEGISRSLAEKIYRELR</sequence>
<gene>
    <name evidence="1" type="primary">uvrC</name>
    <name type="ordered locus">NE0933</name>
</gene>
<protein>
    <recommendedName>
        <fullName evidence="1">UvrABC system protein C</fullName>
        <shortName evidence="1">Protein UvrC</shortName>
    </recommendedName>
    <alternativeName>
        <fullName evidence="1">Excinuclease ABC subunit C</fullName>
    </alternativeName>
</protein>
<accession>Q820N6</accession>
<dbReference type="EMBL" id="AL954747">
    <property type="protein sequence ID" value="CAD84844.1"/>
    <property type="molecule type" value="Genomic_DNA"/>
</dbReference>
<dbReference type="RefSeq" id="WP_011111544.1">
    <property type="nucleotide sequence ID" value="NC_004757.1"/>
</dbReference>
<dbReference type="SMR" id="Q820N6"/>
<dbReference type="STRING" id="228410.NE0933"/>
<dbReference type="GeneID" id="87104126"/>
<dbReference type="KEGG" id="neu:NE0933"/>
<dbReference type="eggNOG" id="COG0322">
    <property type="taxonomic scope" value="Bacteria"/>
</dbReference>
<dbReference type="HOGENOM" id="CLU_014841_3_0_4"/>
<dbReference type="OrthoDB" id="9804933at2"/>
<dbReference type="PhylomeDB" id="Q820N6"/>
<dbReference type="Proteomes" id="UP000001416">
    <property type="component" value="Chromosome"/>
</dbReference>
<dbReference type="GO" id="GO:0005737">
    <property type="term" value="C:cytoplasm"/>
    <property type="evidence" value="ECO:0007669"/>
    <property type="project" value="UniProtKB-SubCell"/>
</dbReference>
<dbReference type="GO" id="GO:0009380">
    <property type="term" value="C:excinuclease repair complex"/>
    <property type="evidence" value="ECO:0007669"/>
    <property type="project" value="InterPro"/>
</dbReference>
<dbReference type="GO" id="GO:0003677">
    <property type="term" value="F:DNA binding"/>
    <property type="evidence" value="ECO:0007669"/>
    <property type="project" value="UniProtKB-UniRule"/>
</dbReference>
<dbReference type="GO" id="GO:0009381">
    <property type="term" value="F:excinuclease ABC activity"/>
    <property type="evidence" value="ECO:0007669"/>
    <property type="project" value="UniProtKB-UniRule"/>
</dbReference>
<dbReference type="GO" id="GO:0006289">
    <property type="term" value="P:nucleotide-excision repair"/>
    <property type="evidence" value="ECO:0007669"/>
    <property type="project" value="UniProtKB-UniRule"/>
</dbReference>
<dbReference type="GO" id="GO:0009432">
    <property type="term" value="P:SOS response"/>
    <property type="evidence" value="ECO:0007669"/>
    <property type="project" value="UniProtKB-UniRule"/>
</dbReference>
<dbReference type="CDD" id="cd10434">
    <property type="entry name" value="GIY-YIG_UvrC_Cho"/>
    <property type="match status" value="1"/>
</dbReference>
<dbReference type="FunFam" id="3.30.420.340:FF:000001">
    <property type="entry name" value="UvrABC system protein C"/>
    <property type="match status" value="1"/>
</dbReference>
<dbReference type="FunFam" id="3.40.1440.10:FF:000001">
    <property type="entry name" value="UvrABC system protein C"/>
    <property type="match status" value="1"/>
</dbReference>
<dbReference type="Gene3D" id="1.10.150.20">
    <property type="entry name" value="5' to 3' exonuclease, C-terminal subdomain"/>
    <property type="match status" value="1"/>
</dbReference>
<dbReference type="Gene3D" id="3.40.1440.10">
    <property type="entry name" value="GIY-YIG endonuclease"/>
    <property type="match status" value="1"/>
</dbReference>
<dbReference type="Gene3D" id="4.10.860.10">
    <property type="entry name" value="UVR domain"/>
    <property type="match status" value="1"/>
</dbReference>
<dbReference type="Gene3D" id="3.30.420.340">
    <property type="entry name" value="UvrC, RNAse H endonuclease domain"/>
    <property type="match status" value="1"/>
</dbReference>
<dbReference type="HAMAP" id="MF_00203">
    <property type="entry name" value="UvrC"/>
    <property type="match status" value="1"/>
</dbReference>
<dbReference type="InterPro" id="IPR000305">
    <property type="entry name" value="GIY-YIG_endonuc"/>
</dbReference>
<dbReference type="InterPro" id="IPR035901">
    <property type="entry name" value="GIY-YIG_endonuc_sf"/>
</dbReference>
<dbReference type="InterPro" id="IPR047296">
    <property type="entry name" value="GIY-YIG_UvrC_Cho"/>
</dbReference>
<dbReference type="InterPro" id="IPR003583">
    <property type="entry name" value="Hlx-hairpin-Hlx_DNA-bd_motif"/>
</dbReference>
<dbReference type="InterPro" id="IPR010994">
    <property type="entry name" value="RuvA_2-like"/>
</dbReference>
<dbReference type="InterPro" id="IPR001943">
    <property type="entry name" value="UVR_dom"/>
</dbReference>
<dbReference type="InterPro" id="IPR036876">
    <property type="entry name" value="UVR_dom_sf"/>
</dbReference>
<dbReference type="InterPro" id="IPR050066">
    <property type="entry name" value="UvrABC_protein_C"/>
</dbReference>
<dbReference type="InterPro" id="IPR004791">
    <property type="entry name" value="UvrC"/>
</dbReference>
<dbReference type="InterPro" id="IPR001162">
    <property type="entry name" value="UvrC_RNase_H_dom"/>
</dbReference>
<dbReference type="InterPro" id="IPR038476">
    <property type="entry name" value="UvrC_RNase_H_dom_sf"/>
</dbReference>
<dbReference type="NCBIfam" id="NF001824">
    <property type="entry name" value="PRK00558.1-5"/>
    <property type="match status" value="1"/>
</dbReference>
<dbReference type="NCBIfam" id="TIGR00194">
    <property type="entry name" value="uvrC"/>
    <property type="match status" value="1"/>
</dbReference>
<dbReference type="PANTHER" id="PTHR30562:SF1">
    <property type="entry name" value="UVRABC SYSTEM PROTEIN C"/>
    <property type="match status" value="1"/>
</dbReference>
<dbReference type="PANTHER" id="PTHR30562">
    <property type="entry name" value="UVRC/OXIDOREDUCTASE"/>
    <property type="match status" value="1"/>
</dbReference>
<dbReference type="Pfam" id="PF01541">
    <property type="entry name" value="GIY-YIG"/>
    <property type="match status" value="1"/>
</dbReference>
<dbReference type="Pfam" id="PF14520">
    <property type="entry name" value="HHH_5"/>
    <property type="match status" value="1"/>
</dbReference>
<dbReference type="Pfam" id="PF02151">
    <property type="entry name" value="UVR"/>
    <property type="match status" value="1"/>
</dbReference>
<dbReference type="Pfam" id="PF22920">
    <property type="entry name" value="UvrC_RNaseH"/>
    <property type="match status" value="1"/>
</dbReference>
<dbReference type="Pfam" id="PF08459">
    <property type="entry name" value="UvrC_RNaseH_dom"/>
    <property type="match status" value="1"/>
</dbReference>
<dbReference type="SMART" id="SM00465">
    <property type="entry name" value="GIYc"/>
    <property type="match status" value="1"/>
</dbReference>
<dbReference type="SMART" id="SM00278">
    <property type="entry name" value="HhH1"/>
    <property type="match status" value="2"/>
</dbReference>
<dbReference type="SUPFAM" id="SSF46600">
    <property type="entry name" value="C-terminal UvrC-binding domain of UvrB"/>
    <property type="match status" value="1"/>
</dbReference>
<dbReference type="SUPFAM" id="SSF82771">
    <property type="entry name" value="GIY-YIG endonuclease"/>
    <property type="match status" value="1"/>
</dbReference>
<dbReference type="SUPFAM" id="SSF47781">
    <property type="entry name" value="RuvA domain 2-like"/>
    <property type="match status" value="1"/>
</dbReference>
<dbReference type="PROSITE" id="PS50164">
    <property type="entry name" value="GIY_YIG"/>
    <property type="match status" value="1"/>
</dbReference>
<dbReference type="PROSITE" id="PS50151">
    <property type="entry name" value="UVR"/>
    <property type="match status" value="1"/>
</dbReference>
<dbReference type="PROSITE" id="PS50165">
    <property type="entry name" value="UVRC"/>
    <property type="match status" value="1"/>
</dbReference>
<reference key="1">
    <citation type="journal article" date="2003" name="J. Bacteriol.">
        <title>Complete genome sequence of the ammonia-oxidizing bacterium and obligate chemolithoautotroph Nitrosomonas europaea.</title>
        <authorList>
            <person name="Chain P."/>
            <person name="Lamerdin J.E."/>
            <person name="Larimer F.W."/>
            <person name="Regala W."/>
            <person name="Lao V."/>
            <person name="Land M.L."/>
            <person name="Hauser L."/>
            <person name="Hooper A.B."/>
            <person name="Klotz M.G."/>
            <person name="Norton J."/>
            <person name="Sayavedra-Soto L.A."/>
            <person name="Arciero D.M."/>
            <person name="Hommes N.G."/>
            <person name="Whittaker M.M."/>
            <person name="Arp D.J."/>
        </authorList>
    </citation>
    <scope>NUCLEOTIDE SEQUENCE [LARGE SCALE GENOMIC DNA]</scope>
    <source>
        <strain>ATCC 19718 / CIP 103999 / KCTC 2705 / NBRC 14298</strain>
    </source>
</reference>
<comment type="function">
    <text evidence="1">The UvrABC repair system catalyzes the recognition and processing of DNA lesions. UvrC both incises the 5' and 3' sides of the lesion. The N-terminal half is responsible for the 3' incision and the C-terminal half is responsible for the 5' incision.</text>
</comment>
<comment type="subunit">
    <text evidence="1">Interacts with UvrB in an incision complex.</text>
</comment>
<comment type="subcellular location">
    <subcellularLocation>
        <location evidence="1">Cytoplasm</location>
    </subcellularLocation>
</comment>
<comment type="similarity">
    <text evidence="1">Belongs to the UvrC family.</text>
</comment>